<name>RS10_METPB</name>
<gene>
    <name evidence="1" type="primary">rpsJ</name>
    <name type="ordered locus">Mpop_2122</name>
</gene>
<feature type="chain" id="PRO_1000127150" description="Small ribosomal subunit protein uS10">
    <location>
        <begin position="1"/>
        <end position="102"/>
    </location>
</feature>
<comment type="function">
    <text evidence="1">Involved in the binding of tRNA to the ribosomes.</text>
</comment>
<comment type="subunit">
    <text evidence="1">Part of the 30S ribosomal subunit.</text>
</comment>
<comment type="similarity">
    <text evidence="1">Belongs to the universal ribosomal protein uS10 family.</text>
</comment>
<protein>
    <recommendedName>
        <fullName evidence="1">Small ribosomal subunit protein uS10</fullName>
    </recommendedName>
    <alternativeName>
        <fullName evidence="2">30S ribosomal protein S10</fullName>
    </alternativeName>
</protein>
<sequence>MNGQNIRIRLKAFDHRILDASTKEIVSTARRTGAQIRGPIPLPTHIEKFTVNRSPHIDKKSREQFEMRTHKRVLDIVDPTPQTVDALMKLDLAAGVDVEIKL</sequence>
<accession>B1ZLK3</accession>
<evidence type="ECO:0000255" key="1">
    <source>
        <dbReference type="HAMAP-Rule" id="MF_00508"/>
    </source>
</evidence>
<evidence type="ECO:0000305" key="2"/>
<proteinExistence type="inferred from homology"/>
<keyword id="KW-0687">Ribonucleoprotein</keyword>
<keyword id="KW-0689">Ribosomal protein</keyword>
<dbReference type="EMBL" id="CP001029">
    <property type="protein sequence ID" value="ACB80284.1"/>
    <property type="molecule type" value="Genomic_DNA"/>
</dbReference>
<dbReference type="RefSeq" id="WP_003597088.1">
    <property type="nucleotide sequence ID" value="NC_010725.1"/>
</dbReference>
<dbReference type="SMR" id="B1ZLK3"/>
<dbReference type="STRING" id="441620.Mpop_2122"/>
<dbReference type="GeneID" id="72989849"/>
<dbReference type="KEGG" id="mpo:Mpop_2122"/>
<dbReference type="eggNOG" id="COG0051">
    <property type="taxonomic scope" value="Bacteria"/>
</dbReference>
<dbReference type="HOGENOM" id="CLU_122625_1_3_5"/>
<dbReference type="OrthoDB" id="9804464at2"/>
<dbReference type="Proteomes" id="UP000007136">
    <property type="component" value="Chromosome"/>
</dbReference>
<dbReference type="GO" id="GO:1990904">
    <property type="term" value="C:ribonucleoprotein complex"/>
    <property type="evidence" value="ECO:0007669"/>
    <property type="project" value="UniProtKB-KW"/>
</dbReference>
<dbReference type="GO" id="GO:0005840">
    <property type="term" value="C:ribosome"/>
    <property type="evidence" value="ECO:0007669"/>
    <property type="project" value="UniProtKB-KW"/>
</dbReference>
<dbReference type="GO" id="GO:0003735">
    <property type="term" value="F:structural constituent of ribosome"/>
    <property type="evidence" value="ECO:0007669"/>
    <property type="project" value="InterPro"/>
</dbReference>
<dbReference type="GO" id="GO:0000049">
    <property type="term" value="F:tRNA binding"/>
    <property type="evidence" value="ECO:0007669"/>
    <property type="project" value="UniProtKB-UniRule"/>
</dbReference>
<dbReference type="GO" id="GO:0006412">
    <property type="term" value="P:translation"/>
    <property type="evidence" value="ECO:0007669"/>
    <property type="project" value="UniProtKB-UniRule"/>
</dbReference>
<dbReference type="FunFam" id="3.30.70.600:FF:000001">
    <property type="entry name" value="30S ribosomal protein S10"/>
    <property type="match status" value="1"/>
</dbReference>
<dbReference type="Gene3D" id="3.30.70.600">
    <property type="entry name" value="Ribosomal protein S10 domain"/>
    <property type="match status" value="1"/>
</dbReference>
<dbReference type="HAMAP" id="MF_00508">
    <property type="entry name" value="Ribosomal_uS10"/>
    <property type="match status" value="1"/>
</dbReference>
<dbReference type="InterPro" id="IPR001848">
    <property type="entry name" value="Ribosomal_uS10"/>
</dbReference>
<dbReference type="InterPro" id="IPR018268">
    <property type="entry name" value="Ribosomal_uS10_CS"/>
</dbReference>
<dbReference type="InterPro" id="IPR027486">
    <property type="entry name" value="Ribosomal_uS10_dom"/>
</dbReference>
<dbReference type="InterPro" id="IPR036838">
    <property type="entry name" value="Ribosomal_uS10_dom_sf"/>
</dbReference>
<dbReference type="NCBIfam" id="NF001861">
    <property type="entry name" value="PRK00596.1"/>
    <property type="match status" value="1"/>
</dbReference>
<dbReference type="NCBIfam" id="TIGR01049">
    <property type="entry name" value="rpsJ_bact"/>
    <property type="match status" value="1"/>
</dbReference>
<dbReference type="PANTHER" id="PTHR11700">
    <property type="entry name" value="30S RIBOSOMAL PROTEIN S10 FAMILY MEMBER"/>
    <property type="match status" value="1"/>
</dbReference>
<dbReference type="Pfam" id="PF00338">
    <property type="entry name" value="Ribosomal_S10"/>
    <property type="match status" value="1"/>
</dbReference>
<dbReference type="PRINTS" id="PR00971">
    <property type="entry name" value="RIBOSOMALS10"/>
</dbReference>
<dbReference type="SMART" id="SM01403">
    <property type="entry name" value="Ribosomal_S10"/>
    <property type="match status" value="1"/>
</dbReference>
<dbReference type="SUPFAM" id="SSF54999">
    <property type="entry name" value="Ribosomal protein S10"/>
    <property type="match status" value="1"/>
</dbReference>
<dbReference type="PROSITE" id="PS00361">
    <property type="entry name" value="RIBOSOMAL_S10"/>
    <property type="match status" value="1"/>
</dbReference>
<organism>
    <name type="scientific">Methylorubrum populi (strain ATCC BAA-705 / NCIMB 13946 / BJ001)</name>
    <name type="common">Methylobacterium populi</name>
    <dbReference type="NCBI Taxonomy" id="441620"/>
    <lineage>
        <taxon>Bacteria</taxon>
        <taxon>Pseudomonadati</taxon>
        <taxon>Pseudomonadota</taxon>
        <taxon>Alphaproteobacteria</taxon>
        <taxon>Hyphomicrobiales</taxon>
        <taxon>Methylobacteriaceae</taxon>
        <taxon>Methylorubrum</taxon>
    </lineage>
</organism>
<reference key="1">
    <citation type="submission" date="2008-04" db="EMBL/GenBank/DDBJ databases">
        <title>Complete sequence of chromosome of Methylobacterium populi BJ001.</title>
        <authorList>
            <consortium name="US DOE Joint Genome Institute"/>
            <person name="Copeland A."/>
            <person name="Lucas S."/>
            <person name="Lapidus A."/>
            <person name="Glavina del Rio T."/>
            <person name="Dalin E."/>
            <person name="Tice H."/>
            <person name="Bruce D."/>
            <person name="Goodwin L."/>
            <person name="Pitluck S."/>
            <person name="Chertkov O."/>
            <person name="Brettin T."/>
            <person name="Detter J.C."/>
            <person name="Han C."/>
            <person name="Kuske C.R."/>
            <person name="Schmutz J."/>
            <person name="Larimer F."/>
            <person name="Land M."/>
            <person name="Hauser L."/>
            <person name="Kyrpides N."/>
            <person name="Mikhailova N."/>
            <person name="Marx C."/>
            <person name="Richardson P."/>
        </authorList>
    </citation>
    <scope>NUCLEOTIDE SEQUENCE [LARGE SCALE GENOMIC DNA]</scope>
    <source>
        <strain>ATCC BAA-705 / NCIMB 13946 / BJ001</strain>
    </source>
</reference>